<feature type="chain" id="PRO_0000352935" description="Threonylcarbamoyl-AMP synthase">
    <location>
        <begin position="1"/>
        <end position="180"/>
    </location>
</feature>
<feature type="domain" description="YrdC-like" evidence="1">
    <location>
        <begin position="1"/>
        <end position="180"/>
    </location>
</feature>
<dbReference type="EC" id="2.7.7.87" evidence="1"/>
<dbReference type="EMBL" id="CP000284">
    <property type="protein sequence ID" value="ABE48618.1"/>
    <property type="molecule type" value="Genomic_DNA"/>
</dbReference>
<dbReference type="RefSeq" id="WP_011478715.1">
    <property type="nucleotide sequence ID" value="NC_007947.1"/>
</dbReference>
<dbReference type="SMR" id="Q1H4G9"/>
<dbReference type="STRING" id="265072.Mfla_0347"/>
<dbReference type="KEGG" id="mfa:Mfla_0347"/>
<dbReference type="eggNOG" id="COG0009">
    <property type="taxonomic scope" value="Bacteria"/>
</dbReference>
<dbReference type="HOGENOM" id="CLU_031397_6_1_4"/>
<dbReference type="OrthoDB" id="9814580at2"/>
<dbReference type="Proteomes" id="UP000002440">
    <property type="component" value="Chromosome"/>
</dbReference>
<dbReference type="GO" id="GO:0005737">
    <property type="term" value="C:cytoplasm"/>
    <property type="evidence" value="ECO:0007669"/>
    <property type="project" value="UniProtKB-SubCell"/>
</dbReference>
<dbReference type="GO" id="GO:0005524">
    <property type="term" value="F:ATP binding"/>
    <property type="evidence" value="ECO:0007669"/>
    <property type="project" value="UniProtKB-UniRule"/>
</dbReference>
<dbReference type="GO" id="GO:0003725">
    <property type="term" value="F:double-stranded RNA binding"/>
    <property type="evidence" value="ECO:0007669"/>
    <property type="project" value="InterPro"/>
</dbReference>
<dbReference type="GO" id="GO:0061710">
    <property type="term" value="F:L-threonylcarbamoyladenylate synthase"/>
    <property type="evidence" value="ECO:0007669"/>
    <property type="project" value="UniProtKB-EC"/>
</dbReference>
<dbReference type="GO" id="GO:0000049">
    <property type="term" value="F:tRNA binding"/>
    <property type="evidence" value="ECO:0007669"/>
    <property type="project" value="TreeGrafter"/>
</dbReference>
<dbReference type="GO" id="GO:0006450">
    <property type="term" value="P:regulation of translational fidelity"/>
    <property type="evidence" value="ECO:0007669"/>
    <property type="project" value="TreeGrafter"/>
</dbReference>
<dbReference type="GO" id="GO:0002949">
    <property type="term" value="P:tRNA threonylcarbamoyladenosine modification"/>
    <property type="evidence" value="ECO:0007669"/>
    <property type="project" value="UniProtKB-UniRule"/>
</dbReference>
<dbReference type="FunFam" id="3.90.870.10:FF:000004">
    <property type="entry name" value="Threonylcarbamoyl-AMP synthase"/>
    <property type="match status" value="1"/>
</dbReference>
<dbReference type="Gene3D" id="3.90.870.10">
    <property type="entry name" value="DHBP synthase"/>
    <property type="match status" value="1"/>
</dbReference>
<dbReference type="HAMAP" id="MF_01852">
    <property type="entry name" value="TsaC"/>
    <property type="match status" value="1"/>
</dbReference>
<dbReference type="InterPro" id="IPR017945">
    <property type="entry name" value="DHBP_synth_RibB-like_a/b_dom"/>
</dbReference>
<dbReference type="InterPro" id="IPR006070">
    <property type="entry name" value="Sua5-like_dom"/>
</dbReference>
<dbReference type="InterPro" id="IPR023535">
    <property type="entry name" value="TC-AMP_synthase"/>
</dbReference>
<dbReference type="InterPro" id="IPR050156">
    <property type="entry name" value="TC-AMP_synthase_SUA5"/>
</dbReference>
<dbReference type="PANTHER" id="PTHR17490">
    <property type="entry name" value="SUA5"/>
    <property type="match status" value="1"/>
</dbReference>
<dbReference type="PANTHER" id="PTHR17490:SF18">
    <property type="entry name" value="THREONYLCARBAMOYL-AMP SYNTHASE"/>
    <property type="match status" value="1"/>
</dbReference>
<dbReference type="Pfam" id="PF01300">
    <property type="entry name" value="Sua5_yciO_yrdC"/>
    <property type="match status" value="1"/>
</dbReference>
<dbReference type="SUPFAM" id="SSF55821">
    <property type="entry name" value="YrdC/RibB"/>
    <property type="match status" value="1"/>
</dbReference>
<dbReference type="PROSITE" id="PS51163">
    <property type="entry name" value="YRDC"/>
    <property type="match status" value="1"/>
</dbReference>
<proteinExistence type="inferred from homology"/>
<sequence>MRARALQHFLRSGGVIAYPTESCFGLGCDPTNHRALKRLLRIKGRPQRKGLIVIAQHFSQLQKLIAPVTPEQKQRMFTRWPGPHTWLVPASRRCPALLRGRHTSLAVRVTANPLAANLCRHAGMALVSTSANHNGRVPAKTARECHRLFGGRVKVLPGRTGGASKPSTIQDLITGAIVRP</sequence>
<keyword id="KW-0067">ATP-binding</keyword>
<keyword id="KW-0963">Cytoplasm</keyword>
<keyword id="KW-0547">Nucleotide-binding</keyword>
<keyword id="KW-0548">Nucleotidyltransferase</keyword>
<keyword id="KW-1185">Reference proteome</keyword>
<keyword id="KW-0808">Transferase</keyword>
<keyword id="KW-0819">tRNA processing</keyword>
<name>TSAC_METFK</name>
<evidence type="ECO:0000255" key="1">
    <source>
        <dbReference type="HAMAP-Rule" id="MF_01852"/>
    </source>
</evidence>
<comment type="function">
    <text evidence="1">Required for the formation of a threonylcarbamoyl group on adenosine at position 37 (t(6)A37) in tRNAs that read codons beginning with adenine. Catalyzes the conversion of L-threonine, HCO(3)(-)/CO(2) and ATP to give threonylcarbamoyl-AMP (TC-AMP) as the acyladenylate intermediate, with the release of diphosphate.</text>
</comment>
<comment type="catalytic activity">
    <reaction evidence="1">
        <text>L-threonine + hydrogencarbonate + ATP = L-threonylcarbamoyladenylate + diphosphate + H2O</text>
        <dbReference type="Rhea" id="RHEA:36407"/>
        <dbReference type="ChEBI" id="CHEBI:15377"/>
        <dbReference type="ChEBI" id="CHEBI:17544"/>
        <dbReference type="ChEBI" id="CHEBI:30616"/>
        <dbReference type="ChEBI" id="CHEBI:33019"/>
        <dbReference type="ChEBI" id="CHEBI:57926"/>
        <dbReference type="ChEBI" id="CHEBI:73682"/>
        <dbReference type="EC" id="2.7.7.87"/>
    </reaction>
</comment>
<comment type="subcellular location">
    <subcellularLocation>
        <location evidence="1">Cytoplasm</location>
    </subcellularLocation>
</comment>
<comment type="similarity">
    <text evidence="1">Belongs to the SUA5 family. TsaC subfamily.</text>
</comment>
<protein>
    <recommendedName>
        <fullName evidence="1">Threonylcarbamoyl-AMP synthase</fullName>
        <shortName evidence="1">TC-AMP synthase</shortName>
        <ecNumber evidence="1">2.7.7.87</ecNumber>
    </recommendedName>
    <alternativeName>
        <fullName evidence="1">L-threonylcarbamoyladenylate synthase</fullName>
    </alternativeName>
    <alternativeName>
        <fullName evidence="1">t(6)A37 threonylcarbamoyladenosine biosynthesis protein TsaC</fullName>
    </alternativeName>
    <alternativeName>
        <fullName evidence="1">tRNA threonylcarbamoyladenosine biosynthesis protein TsaC</fullName>
    </alternativeName>
</protein>
<reference key="1">
    <citation type="submission" date="2006-03" db="EMBL/GenBank/DDBJ databases">
        <title>Complete sequence of Methylobacillus flagellatus KT.</title>
        <authorList>
            <consortium name="US DOE Joint Genome Institute"/>
            <person name="Copeland A."/>
            <person name="Lucas S."/>
            <person name="Lapidus A."/>
            <person name="Barry K."/>
            <person name="Detter J.C."/>
            <person name="Glavina del Rio T."/>
            <person name="Hammon N."/>
            <person name="Israni S."/>
            <person name="Dalin E."/>
            <person name="Tice H."/>
            <person name="Pitluck S."/>
            <person name="Brettin T."/>
            <person name="Bruce D."/>
            <person name="Han C."/>
            <person name="Tapia R."/>
            <person name="Saunders E."/>
            <person name="Gilna P."/>
            <person name="Schmutz J."/>
            <person name="Larimer F."/>
            <person name="Land M."/>
            <person name="Kyrpides N."/>
            <person name="Anderson I."/>
            <person name="Richardson P."/>
        </authorList>
    </citation>
    <scope>NUCLEOTIDE SEQUENCE [LARGE SCALE GENOMIC DNA]</scope>
    <source>
        <strain>ATCC 51484 / DSM 6875 / VKM B-1610 / KT</strain>
    </source>
</reference>
<organism>
    <name type="scientific">Methylobacillus flagellatus (strain ATCC 51484 / DSM 6875 / VKM B-1610 / KT)</name>
    <dbReference type="NCBI Taxonomy" id="265072"/>
    <lineage>
        <taxon>Bacteria</taxon>
        <taxon>Pseudomonadati</taxon>
        <taxon>Pseudomonadota</taxon>
        <taxon>Betaproteobacteria</taxon>
        <taxon>Nitrosomonadales</taxon>
        <taxon>Methylophilaceae</taxon>
        <taxon>Methylobacillus</taxon>
    </lineage>
</organism>
<accession>Q1H4G9</accession>
<gene>
    <name evidence="1" type="primary">tsaC</name>
    <name type="synonym">rimN</name>
    <name type="ordered locus">Mfla_0347</name>
</gene>